<name>RISB_ECOHS</name>
<evidence type="ECO:0000255" key="1">
    <source>
        <dbReference type="HAMAP-Rule" id="MF_00178"/>
    </source>
</evidence>
<dbReference type="EC" id="2.5.1.78" evidence="1"/>
<dbReference type="EMBL" id="CP000802">
    <property type="protein sequence ID" value="ABV04871.1"/>
    <property type="molecule type" value="Genomic_DNA"/>
</dbReference>
<dbReference type="SMR" id="A7ZX67"/>
<dbReference type="KEGG" id="ecx:EcHS_A0486"/>
<dbReference type="HOGENOM" id="CLU_089358_1_1_6"/>
<dbReference type="UniPathway" id="UPA00275">
    <property type="reaction ID" value="UER00404"/>
</dbReference>
<dbReference type="GO" id="GO:0005829">
    <property type="term" value="C:cytosol"/>
    <property type="evidence" value="ECO:0007669"/>
    <property type="project" value="TreeGrafter"/>
</dbReference>
<dbReference type="GO" id="GO:0009349">
    <property type="term" value="C:riboflavin synthase complex"/>
    <property type="evidence" value="ECO:0007669"/>
    <property type="project" value="InterPro"/>
</dbReference>
<dbReference type="GO" id="GO:0000906">
    <property type="term" value="F:6,7-dimethyl-8-ribityllumazine synthase activity"/>
    <property type="evidence" value="ECO:0007669"/>
    <property type="project" value="UniProtKB-UniRule"/>
</dbReference>
<dbReference type="GO" id="GO:0009231">
    <property type="term" value="P:riboflavin biosynthetic process"/>
    <property type="evidence" value="ECO:0007669"/>
    <property type="project" value="UniProtKB-UniRule"/>
</dbReference>
<dbReference type="CDD" id="cd09209">
    <property type="entry name" value="Lumazine_synthase-I"/>
    <property type="match status" value="1"/>
</dbReference>
<dbReference type="FunFam" id="3.40.50.960:FF:000001">
    <property type="entry name" value="6,7-dimethyl-8-ribityllumazine synthase"/>
    <property type="match status" value="1"/>
</dbReference>
<dbReference type="Gene3D" id="3.40.50.960">
    <property type="entry name" value="Lumazine/riboflavin synthase"/>
    <property type="match status" value="1"/>
</dbReference>
<dbReference type="HAMAP" id="MF_00178">
    <property type="entry name" value="Lumazine_synth"/>
    <property type="match status" value="1"/>
</dbReference>
<dbReference type="InterPro" id="IPR034964">
    <property type="entry name" value="LS"/>
</dbReference>
<dbReference type="InterPro" id="IPR002180">
    <property type="entry name" value="LS/RS"/>
</dbReference>
<dbReference type="InterPro" id="IPR036467">
    <property type="entry name" value="LS/RS_sf"/>
</dbReference>
<dbReference type="NCBIfam" id="TIGR00114">
    <property type="entry name" value="lumazine-synth"/>
    <property type="match status" value="1"/>
</dbReference>
<dbReference type="NCBIfam" id="NF000812">
    <property type="entry name" value="PRK00061.1-4"/>
    <property type="match status" value="1"/>
</dbReference>
<dbReference type="PANTHER" id="PTHR21058:SF0">
    <property type="entry name" value="6,7-DIMETHYL-8-RIBITYLLUMAZINE SYNTHASE"/>
    <property type="match status" value="1"/>
</dbReference>
<dbReference type="PANTHER" id="PTHR21058">
    <property type="entry name" value="6,7-DIMETHYL-8-RIBITYLLUMAZINE SYNTHASE DMRL SYNTHASE LUMAZINE SYNTHASE"/>
    <property type="match status" value="1"/>
</dbReference>
<dbReference type="Pfam" id="PF00885">
    <property type="entry name" value="DMRL_synthase"/>
    <property type="match status" value="1"/>
</dbReference>
<dbReference type="SUPFAM" id="SSF52121">
    <property type="entry name" value="Lumazine synthase"/>
    <property type="match status" value="1"/>
</dbReference>
<feature type="chain" id="PRO_1000058367" description="6,7-dimethyl-8-ribityllumazine synthase">
    <location>
        <begin position="1"/>
        <end position="156"/>
    </location>
</feature>
<feature type="active site" description="Proton donor" evidence="1">
    <location>
        <position position="89"/>
    </location>
</feature>
<feature type="binding site" evidence="1">
    <location>
        <position position="22"/>
    </location>
    <ligand>
        <name>5-amino-6-(D-ribitylamino)uracil</name>
        <dbReference type="ChEBI" id="CHEBI:15934"/>
    </ligand>
</feature>
<feature type="binding site" evidence="1">
    <location>
        <begin position="57"/>
        <end position="59"/>
    </location>
    <ligand>
        <name>5-amino-6-(D-ribitylamino)uracil</name>
        <dbReference type="ChEBI" id="CHEBI:15934"/>
    </ligand>
</feature>
<feature type="binding site" evidence="1">
    <location>
        <begin position="81"/>
        <end position="83"/>
    </location>
    <ligand>
        <name>5-amino-6-(D-ribitylamino)uracil</name>
        <dbReference type="ChEBI" id="CHEBI:15934"/>
    </ligand>
</feature>
<feature type="binding site" evidence="1">
    <location>
        <begin position="86"/>
        <end position="87"/>
    </location>
    <ligand>
        <name>(2S)-2-hydroxy-3-oxobutyl phosphate</name>
        <dbReference type="ChEBI" id="CHEBI:58830"/>
    </ligand>
</feature>
<feature type="binding site" evidence="1">
    <location>
        <position position="114"/>
    </location>
    <ligand>
        <name>5-amino-6-(D-ribitylamino)uracil</name>
        <dbReference type="ChEBI" id="CHEBI:15934"/>
    </ligand>
</feature>
<feature type="binding site" evidence="1">
    <location>
        <position position="128"/>
    </location>
    <ligand>
        <name>(2S)-2-hydroxy-3-oxobutyl phosphate</name>
        <dbReference type="ChEBI" id="CHEBI:58830"/>
    </ligand>
</feature>
<protein>
    <recommendedName>
        <fullName evidence="1">6,7-dimethyl-8-ribityllumazine synthase</fullName>
        <shortName evidence="1">DMRL synthase</shortName>
        <shortName evidence="1">LS</shortName>
        <shortName evidence="1">Lumazine synthase</shortName>
        <ecNumber evidence="1">2.5.1.78</ecNumber>
    </recommendedName>
</protein>
<organism>
    <name type="scientific">Escherichia coli O9:H4 (strain HS)</name>
    <dbReference type="NCBI Taxonomy" id="331112"/>
    <lineage>
        <taxon>Bacteria</taxon>
        <taxon>Pseudomonadati</taxon>
        <taxon>Pseudomonadota</taxon>
        <taxon>Gammaproteobacteria</taxon>
        <taxon>Enterobacterales</taxon>
        <taxon>Enterobacteriaceae</taxon>
        <taxon>Escherichia</taxon>
    </lineage>
</organism>
<accession>A7ZX67</accession>
<gene>
    <name evidence="1" type="primary">ribH</name>
    <name type="ordered locus">EcHS_A0486</name>
</gene>
<keyword id="KW-0686">Riboflavin biosynthesis</keyword>
<keyword id="KW-0808">Transferase</keyword>
<proteinExistence type="inferred from homology"/>
<sequence length="156" mass="16157">MNIIEANVATPDARVAITIARFNNFINDSLLEGAIDALKRIGQVKDENITVVWVPGAYELPLAAGALAKTGKYDAVIALGTVIRGGTAHFEYVAGGASNGLAHVAQDSEIPVAFGVLTTESIEQAIERAGTKAGNKGAEAALTALEMINVLKAIKA</sequence>
<reference key="1">
    <citation type="journal article" date="2008" name="J. Bacteriol.">
        <title>The pangenome structure of Escherichia coli: comparative genomic analysis of E. coli commensal and pathogenic isolates.</title>
        <authorList>
            <person name="Rasko D.A."/>
            <person name="Rosovitz M.J."/>
            <person name="Myers G.S.A."/>
            <person name="Mongodin E.F."/>
            <person name="Fricke W.F."/>
            <person name="Gajer P."/>
            <person name="Crabtree J."/>
            <person name="Sebaihia M."/>
            <person name="Thomson N.R."/>
            <person name="Chaudhuri R."/>
            <person name="Henderson I.R."/>
            <person name="Sperandio V."/>
            <person name="Ravel J."/>
        </authorList>
    </citation>
    <scope>NUCLEOTIDE SEQUENCE [LARGE SCALE GENOMIC DNA]</scope>
    <source>
        <strain>HS</strain>
    </source>
</reference>
<comment type="function">
    <text evidence="1">Catalyzes the formation of 6,7-dimethyl-8-ribityllumazine by condensation of 5-amino-6-(D-ribitylamino)uracil with 3,4-dihydroxy-2-butanone 4-phosphate. This is the penultimate step in the biosynthesis of riboflavin.</text>
</comment>
<comment type="catalytic activity">
    <reaction evidence="1">
        <text>(2S)-2-hydroxy-3-oxobutyl phosphate + 5-amino-6-(D-ribitylamino)uracil = 6,7-dimethyl-8-(1-D-ribityl)lumazine + phosphate + 2 H2O + H(+)</text>
        <dbReference type="Rhea" id="RHEA:26152"/>
        <dbReference type="ChEBI" id="CHEBI:15377"/>
        <dbReference type="ChEBI" id="CHEBI:15378"/>
        <dbReference type="ChEBI" id="CHEBI:15934"/>
        <dbReference type="ChEBI" id="CHEBI:43474"/>
        <dbReference type="ChEBI" id="CHEBI:58201"/>
        <dbReference type="ChEBI" id="CHEBI:58830"/>
        <dbReference type="EC" id="2.5.1.78"/>
    </reaction>
</comment>
<comment type="pathway">
    <text evidence="1">Cofactor biosynthesis; riboflavin biosynthesis; riboflavin from 2-hydroxy-3-oxobutyl phosphate and 5-amino-6-(D-ribitylamino)uracil: step 1/2.</text>
</comment>
<comment type="subunit">
    <text evidence="1">Forms an icosahedral capsid composed of 60 subunits, arranged as a dodecamer of pentamers.</text>
</comment>
<comment type="similarity">
    <text evidence="1">Belongs to the DMRL synthase family.</text>
</comment>